<protein>
    <recommendedName>
        <fullName evidence="1">Glutamate-1-semialdehyde 2,1-aminomutase</fullName>
        <shortName evidence="1">GSA</shortName>
        <ecNumber evidence="1">5.4.3.8</ecNumber>
    </recommendedName>
    <alternativeName>
        <fullName evidence="1">Glutamate-1-semialdehyde aminotransferase</fullName>
        <shortName evidence="1">GSA-AT</shortName>
    </alternativeName>
</protein>
<accession>Q325Y5</accession>
<dbReference type="EC" id="5.4.3.8" evidence="1"/>
<dbReference type="EMBL" id="CP000036">
    <property type="protein sequence ID" value="ABB64873.1"/>
    <property type="molecule type" value="Genomic_DNA"/>
</dbReference>
<dbReference type="RefSeq" id="WP_000045325.1">
    <property type="nucleotide sequence ID" value="NC_007613.1"/>
</dbReference>
<dbReference type="SMR" id="Q325Y5"/>
<dbReference type="KEGG" id="sbo:SBO_0143"/>
<dbReference type="HOGENOM" id="CLU_016922_1_5_6"/>
<dbReference type="UniPathway" id="UPA00251">
    <property type="reaction ID" value="UER00317"/>
</dbReference>
<dbReference type="Proteomes" id="UP000007067">
    <property type="component" value="Chromosome"/>
</dbReference>
<dbReference type="GO" id="GO:0005737">
    <property type="term" value="C:cytoplasm"/>
    <property type="evidence" value="ECO:0007669"/>
    <property type="project" value="UniProtKB-SubCell"/>
</dbReference>
<dbReference type="GO" id="GO:0042286">
    <property type="term" value="F:glutamate-1-semialdehyde 2,1-aminomutase activity"/>
    <property type="evidence" value="ECO:0007669"/>
    <property type="project" value="UniProtKB-UniRule"/>
</dbReference>
<dbReference type="GO" id="GO:0030170">
    <property type="term" value="F:pyridoxal phosphate binding"/>
    <property type="evidence" value="ECO:0007669"/>
    <property type="project" value="InterPro"/>
</dbReference>
<dbReference type="GO" id="GO:0008483">
    <property type="term" value="F:transaminase activity"/>
    <property type="evidence" value="ECO:0007669"/>
    <property type="project" value="InterPro"/>
</dbReference>
<dbReference type="GO" id="GO:0006782">
    <property type="term" value="P:protoporphyrinogen IX biosynthetic process"/>
    <property type="evidence" value="ECO:0007669"/>
    <property type="project" value="UniProtKB-UniRule"/>
</dbReference>
<dbReference type="CDD" id="cd00610">
    <property type="entry name" value="OAT_like"/>
    <property type="match status" value="1"/>
</dbReference>
<dbReference type="FunFam" id="3.40.640.10:FF:000021">
    <property type="entry name" value="Glutamate-1-semialdehyde 2,1-aminomutase"/>
    <property type="match status" value="1"/>
</dbReference>
<dbReference type="FunFam" id="3.90.1150.10:FF:000012">
    <property type="entry name" value="Glutamate-1-semialdehyde 2,1-aminomutase"/>
    <property type="match status" value="1"/>
</dbReference>
<dbReference type="Gene3D" id="3.90.1150.10">
    <property type="entry name" value="Aspartate Aminotransferase, domain 1"/>
    <property type="match status" value="1"/>
</dbReference>
<dbReference type="Gene3D" id="3.40.640.10">
    <property type="entry name" value="Type I PLP-dependent aspartate aminotransferase-like (Major domain)"/>
    <property type="match status" value="1"/>
</dbReference>
<dbReference type="HAMAP" id="MF_00375">
    <property type="entry name" value="HemL_aminotrans_3"/>
    <property type="match status" value="1"/>
</dbReference>
<dbReference type="InterPro" id="IPR004639">
    <property type="entry name" value="4pyrrol_synth_GluAld_NH2Trfase"/>
</dbReference>
<dbReference type="InterPro" id="IPR005814">
    <property type="entry name" value="Aminotrans_3"/>
</dbReference>
<dbReference type="InterPro" id="IPR049704">
    <property type="entry name" value="Aminotrans_3_PPA_site"/>
</dbReference>
<dbReference type="InterPro" id="IPR015424">
    <property type="entry name" value="PyrdxlP-dep_Trfase"/>
</dbReference>
<dbReference type="InterPro" id="IPR015421">
    <property type="entry name" value="PyrdxlP-dep_Trfase_major"/>
</dbReference>
<dbReference type="InterPro" id="IPR015422">
    <property type="entry name" value="PyrdxlP-dep_Trfase_small"/>
</dbReference>
<dbReference type="NCBIfam" id="TIGR00713">
    <property type="entry name" value="hemL"/>
    <property type="match status" value="1"/>
</dbReference>
<dbReference type="NCBIfam" id="NF000818">
    <property type="entry name" value="PRK00062.1"/>
    <property type="match status" value="1"/>
</dbReference>
<dbReference type="PANTHER" id="PTHR43713">
    <property type="entry name" value="GLUTAMATE-1-SEMIALDEHYDE 2,1-AMINOMUTASE"/>
    <property type="match status" value="1"/>
</dbReference>
<dbReference type="PANTHER" id="PTHR43713:SF3">
    <property type="entry name" value="GLUTAMATE-1-SEMIALDEHYDE 2,1-AMINOMUTASE 1, CHLOROPLASTIC-RELATED"/>
    <property type="match status" value="1"/>
</dbReference>
<dbReference type="Pfam" id="PF00202">
    <property type="entry name" value="Aminotran_3"/>
    <property type="match status" value="1"/>
</dbReference>
<dbReference type="SUPFAM" id="SSF53383">
    <property type="entry name" value="PLP-dependent transferases"/>
    <property type="match status" value="1"/>
</dbReference>
<dbReference type="PROSITE" id="PS00600">
    <property type="entry name" value="AA_TRANSFER_CLASS_3"/>
    <property type="match status" value="1"/>
</dbReference>
<name>GSA_SHIBS</name>
<sequence length="426" mass="45343">MSKSENLYSAARELLPGGVNSPVRAFTGVGGTPLFIEKADGAYLYDVDGKAYIDYVGSWGPMVLGHNHPAIRNAVIEAAERGLSFGAPTEMEVKMAQLVTELVPTMDMVRMVNSGTEATMSAIRLARGFTGRDKIIKFEGCYHGHADCLLVKAGSGALTLGQPNSPGVPADFAKHTLTCTYNDLASVRAAFEQYPQEIACIIVEPVAGNMNCVPPQPEFLPGLRALCDEFGALLIIDEVMTGFRVALAGAQDYYGVVPDLTCLGKIIGGGMPVGAFGGRRDVMDALAPTGPVYQAGTLSGNPIAMAAGFACLNEVAQPGVHETLDELTTRLAEGLLEAAEEAGTPLVVNHVGGMFGIFFTDAESVTCYQDVMACDVERFKRFFHMMLDEGVYLAPSAFEAGFMSVAHSMEDINNTIDAARRVFAKL</sequence>
<organism>
    <name type="scientific">Shigella boydii serotype 4 (strain Sb227)</name>
    <dbReference type="NCBI Taxonomy" id="300268"/>
    <lineage>
        <taxon>Bacteria</taxon>
        <taxon>Pseudomonadati</taxon>
        <taxon>Pseudomonadota</taxon>
        <taxon>Gammaproteobacteria</taxon>
        <taxon>Enterobacterales</taxon>
        <taxon>Enterobacteriaceae</taxon>
        <taxon>Shigella</taxon>
    </lineage>
</organism>
<evidence type="ECO:0000255" key="1">
    <source>
        <dbReference type="HAMAP-Rule" id="MF_00375"/>
    </source>
</evidence>
<gene>
    <name evidence="1" type="primary">hemL</name>
    <name type="ordered locus">SBO_0143</name>
</gene>
<feature type="chain" id="PRO_0000243615" description="Glutamate-1-semialdehyde 2,1-aminomutase">
    <location>
        <begin position="1"/>
        <end position="426"/>
    </location>
</feature>
<feature type="modified residue" description="N6-(pyridoxal phosphate)lysine" evidence="1">
    <location>
        <position position="265"/>
    </location>
</feature>
<reference key="1">
    <citation type="journal article" date="2005" name="Nucleic Acids Res.">
        <title>Genome dynamics and diversity of Shigella species, the etiologic agents of bacillary dysentery.</title>
        <authorList>
            <person name="Yang F."/>
            <person name="Yang J."/>
            <person name="Zhang X."/>
            <person name="Chen L."/>
            <person name="Jiang Y."/>
            <person name="Yan Y."/>
            <person name="Tang X."/>
            <person name="Wang J."/>
            <person name="Xiong Z."/>
            <person name="Dong J."/>
            <person name="Xue Y."/>
            <person name="Zhu Y."/>
            <person name="Xu X."/>
            <person name="Sun L."/>
            <person name="Chen S."/>
            <person name="Nie H."/>
            <person name="Peng J."/>
            <person name="Xu J."/>
            <person name="Wang Y."/>
            <person name="Yuan Z."/>
            <person name="Wen Y."/>
            <person name="Yao Z."/>
            <person name="Shen Y."/>
            <person name="Qiang B."/>
            <person name="Hou Y."/>
            <person name="Yu J."/>
            <person name="Jin Q."/>
        </authorList>
    </citation>
    <scope>NUCLEOTIDE SEQUENCE [LARGE SCALE GENOMIC DNA]</scope>
    <source>
        <strain>Sb227</strain>
    </source>
</reference>
<comment type="catalytic activity">
    <reaction evidence="1">
        <text>(S)-4-amino-5-oxopentanoate = 5-aminolevulinate</text>
        <dbReference type="Rhea" id="RHEA:14265"/>
        <dbReference type="ChEBI" id="CHEBI:57501"/>
        <dbReference type="ChEBI" id="CHEBI:356416"/>
        <dbReference type="EC" id="5.4.3.8"/>
    </reaction>
</comment>
<comment type="cofactor">
    <cofactor evidence="1">
        <name>pyridoxal 5'-phosphate</name>
        <dbReference type="ChEBI" id="CHEBI:597326"/>
    </cofactor>
</comment>
<comment type="pathway">
    <text evidence="1">Porphyrin-containing compound metabolism; protoporphyrin-IX biosynthesis; 5-aminolevulinate from L-glutamyl-tRNA(Glu): step 2/2.</text>
</comment>
<comment type="subunit">
    <text evidence="1">Homodimer.</text>
</comment>
<comment type="subcellular location">
    <subcellularLocation>
        <location evidence="1">Cytoplasm</location>
    </subcellularLocation>
</comment>
<comment type="similarity">
    <text evidence="1">Belongs to the class-III pyridoxal-phosphate-dependent aminotransferase family. HemL subfamily.</text>
</comment>
<proteinExistence type="inferred from homology"/>
<keyword id="KW-0963">Cytoplasm</keyword>
<keyword id="KW-0413">Isomerase</keyword>
<keyword id="KW-0627">Porphyrin biosynthesis</keyword>
<keyword id="KW-0663">Pyridoxal phosphate</keyword>